<feature type="chain" id="PRO_1000065195" description="Regulatory protein RecX">
    <location>
        <begin position="1"/>
        <end position="153"/>
    </location>
</feature>
<organism>
    <name type="scientific">Pseudomonas aeruginosa (strain UCBPP-PA14)</name>
    <dbReference type="NCBI Taxonomy" id="208963"/>
    <lineage>
        <taxon>Bacteria</taxon>
        <taxon>Pseudomonadati</taxon>
        <taxon>Pseudomonadota</taxon>
        <taxon>Gammaproteobacteria</taxon>
        <taxon>Pseudomonadales</taxon>
        <taxon>Pseudomonadaceae</taxon>
        <taxon>Pseudomonas</taxon>
    </lineage>
</organism>
<evidence type="ECO:0000255" key="1">
    <source>
        <dbReference type="HAMAP-Rule" id="MF_01114"/>
    </source>
</evidence>
<accession>Q02R88</accession>
<reference key="1">
    <citation type="journal article" date="2006" name="Genome Biol.">
        <title>Genomic analysis reveals that Pseudomonas aeruginosa virulence is combinatorial.</title>
        <authorList>
            <person name="Lee D.G."/>
            <person name="Urbach J.M."/>
            <person name="Wu G."/>
            <person name="Liberati N.T."/>
            <person name="Feinbaum R.L."/>
            <person name="Miyata S."/>
            <person name="Diggins L.T."/>
            <person name="He J."/>
            <person name="Saucier M."/>
            <person name="Deziel E."/>
            <person name="Friedman L."/>
            <person name="Li L."/>
            <person name="Grills G."/>
            <person name="Montgomery K."/>
            <person name="Kucherlapati R."/>
            <person name="Rahme L.G."/>
            <person name="Ausubel F.M."/>
        </authorList>
    </citation>
    <scope>NUCLEOTIDE SEQUENCE [LARGE SCALE GENOMIC DNA]</scope>
    <source>
        <strain>UCBPP-PA14</strain>
    </source>
</reference>
<comment type="function">
    <text evidence="1">Modulates RecA activity.</text>
</comment>
<comment type="subcellular location">
    <subcellularLocation>
        <location evidence="1">Cytoplasm</location>
    </subcellularLocation>
</comment>
<comment type="similarity">
    <text evidence="1">Belongs to the RecX family.</text>
</comment>
<dbReference type="EMBL" id="CP000438">
    <property type="protein sequence ID" value="ABJ12849.1"/>
    <property type="molecule type" value="Genomic_DNA"/>
</dbReference>
<dbReference type="RefSeq" id="WP_003138036.1">
    <property type="nucleotide sequence ID" value="NZ_CP034244.1"/>
</dbReference>
<dbReference type="SMR" id="Q02R88"/>
<dbReference type="KEGG" id="pau:PA14_17540"/>
<dbReference type="PseudoCAP" id="PA14_17540"/>
<dbReference type="HOGENOM" id="CLU_066607_3_2_6"/>
<dbReference type="BioCyc" id="PAER208963:G1G74-1446-MONOMER"/>
<dbReference type="Proteomes" id="UP000000653">
    <property type="component" value="Chromosome"/>
</dbReference>
<dbReference type="GO" id="GO:0005737">
    <property type="term" value="C:cytoplasm"/>
    <property type="evidence" value="ECO:0007669"/>
    <property type="project" value="UniProtKB-SubCell"/>
</dbReference>
<dbReference type="GO" id="GO:0006282">
    <property type="term" value="P:regulation of DNA repair"/>
    <property type="evidence" value="ECO:0007669"/>
    <property type="project" value="UniProtKB-UniRule"/>
</dbReference>
<dbReference type="Gene3D" id="1.10.10.10">
    <property type="entry name" value="Winged helix-like DNA-binding domain superfamily/Winged helix DNA-binding domain"/>
    <property type="match status" value="3"/>
</dbReference>
<dbReference type="HAMAP" id="MF_01114">
    <property type="entry name" value="RecX"/>
    <property type="match status" value="1"/>
</dbReference>
<dbReference type="InterPro" id="IPR053926">
    <property type="entry name" value="RecX_HTH_1st"/>
</dbReference>
<dbReference type="InterPro" id="IPR053924">
    <property type="entry name" value="RecX_HTH_2nd"/>
</dbReference>
<dbReference type="InterPro" id="IPR053925">
    <property type="entry name" value="RecX_HTH_3rd"/>
</dbReference>
<dbReference type="InterPro" id="IPR003783">
    <property type="entry name" value="Regulatory_RecX"/>
</dbReference>
<dbReference type="InterPro" id="IPR036388">
    <property type="entry name" value="WH-like_DNA-bd_sf"/>
</dbReference>
<dbReference type="NCBIfam" id="NF001054">
    <property type="entry name" value="PRK00117.2-1"/>
    <property type="match status" value="1"/>
</dbReference>
<dbReference type="PANTHER" id="PTHR33602">
    <property type="entry name" value="REGULATORY PROTEIN RECX FAMILY PROTEIN"/>
    <property type="match status" value="1"/>
</dbReference>
<dbReference type="PANTHER" id="PTHR33602:SF1">
    <property type="entry name" value="REGULATORY PROTEIN RECX FAMILY PROTEIN"/>
    <property type="match status" value="1"/>
</dbReference>
<dbReference type="Pfam" id="PF21982">
    <property type="entry name" value="RecX_HTH1"/>
    <property type="match status" value="1"/>
</dbReference>
<dbReference type="Pfam" id="PF02631">
    <property type="entry name" value="RecX_HTH2"/>
    <property type="match status" value="1"/>
</dbReference>
<dbReference type="Pfam" id="PF21981">
    <property type="entry name" value="RecX_HTH3"/>
    <property type="match status" value="1"/>
</dbReference>
<proteinExistence type="inferred from homology"/>
<gene>
    <name evidence="1" type="primary">recX</name>
    <name type="ordered locus">PA14_17540</name>
</gene>
<sequence>MATVLDTPVAVRRAAMDLLARREHGRAELSRKLRQRGASAELIDPALDRLAEEGLLDESRYLESFIASRARSGHGPLRIREELAQRGLPRADIERALGACEVDWSAQLREVWRRKFARLPQDAREKAQQGRFLAYRGYSMESISRLLNSRSDD</sequence>
<name>RECX_PSEAB</name>
<keyword id="KW-0963">Cytoplasm</keyword>
<protein>
    <recommendedName>
        <fullName evidence="1">Regulatory protein RecX</fullName>
    </recommendedName>
</protein>